<dbReference type="EC" id="2.3.1.74"/>
<dbReference type="EMBL" id="AF315345">
    <property type="protein sequence ID" value="AAG30295.1"/>
    <property type="molecule type" value="mRNA"/>
</dbReference>
<dbReference type="SMR" id="Q9FUB7"/>
<dbReference type="BRENDA" id="2.3.1.74">
    <property type="organism ID" value="2742"/>
</dbReference>
<dbReference type="UniPathway" id="UPA00154"/>
<dbReference type="GO" id="GO:0016210">
    <property type="term" value="F:naringenin-chalcone synthase activity"/>
    <property type="evidence" value="ECO:0000314"/>
    <property type="project" value="UniProtKB"/>
</dbReference>
<dbReference type="GO" id="GO:0009813">
    <property type="term" value="P:flavonoid biosynthetic process"/>
    <property type="evidence" value="ECO:0000314"/>
    <property type="project" value="UniProtKB"/>
</dbReference>
<dbReference type="GO" id="GO:0030639">
    <property type="term" value="P:polyketide biosynthetic process"/>
    <property type="evidence" value="ECO:0007669"/>
    <property type="project" value="TreeGrafter"/>
</dbReference>
<dbReference type="CDD" id="cd00831">
    <property type="entry name" value="CHS_like"/>
    <property type="match status" value="1"/>
</dbReference>
<dbReference type="FunFam" id="3.40.47.10:FF:000014">
    <property type="entry name" value="Chalcone synthase 1"/>
    <property type="match status" value="1"/>
</dbReference>
<dbReference type="FunFam" id="3.40.47.10:FF:000025">
    <property type="entry name" value="Chalcone synthase 2"/>
    <property type="match status" value="1"/>
</dbReference>
<dbReference type="Gene3D" id="3.40.47.10">
    <property type="match status" value="2"/>
</dbReference>
<dbReference type="InterPro" id="IPR012328">
    <property type="entry name" value="Chalcone/stilbene_synt_C"/>
</dbReference>
<dbReference type="InterPro" id="IPR001099">
    <property type="entry name" value="Chalcone/stilbene_synt_N"/>
</dbReference>
<dbReference type="InterPro" id="IPR018088">
    <property type="entry name" value="Chalcone/stilbene_synthase_AS"/>
</dbReference>
<dbReference type="InterPro" id="IPR011141">
    <property type="entry name" value="Polyketide_synthase_type-III"/>
</dbReference>
<dbReference type="InterPro" id="IPR016039">
    <property type="entry name" value="Thiolase-like"/>
</dbReference>
<dbReference type="PANTHER" id="PTHR11877:SF80">
    <property type="entry name" value="CHALCONE SYNTHASE 1"/>
    <property type="match status" value="1"/>
</dbReference>
<dbReference type="PANTHER" id="PTHR11877">
    <property type="entry name" value="HYDROXYMETHYLGLUTARYL-COA SYNTHASE"/>
    <property type="match status" value="1"/>
</dbReference>
<dbReference type="Pfam" id="PF02797">
    <property type="entry name" value="Chal_sti_synt_C"/>
    <property type="match status" value="1"/>
</dbReference>
<dbReference type="Pfam" id="PF00195">
    <property type="entry name" value="Chal_sti_synt_N"/>
    <property type="match status" value="1"/>
</dbReference>
<dbReference type="PIRSF" id="PIRSF000451">
    <property type="entry name" value="PKS_III"/>
    <property type="match status" value="1"/>
</dbReference>
<dbReference type="SUPFAM" id="SSF53901">
    <property type="entry name" value="Thiolase-like"/>
    <property type="match status" value="2"/>
</dbReference>
<dbReference type="PROSITE" id="PS00441">
    <property type="entry name" value="CHALCONE_SYNTH"/>
    <property type="match status" value="1"/>
</dbReference>
<keyword id="KW-0012">Acyltransferase</keyword>
<keyword id="KW-0284">Flavonoid biosynthesis</keyword>
<keyword id="KW-0808">Transferase</keyword>
<proteinExistence type="evidence at protein level"/>
<protein>
    <recommendedName>
        <fullName>Chalcone synthase</fullName>
        <ecNumber>2.3.1.74</ecNumber>
    </recommendedName>
    <alternativeName>
        <fullName>Naringenin-chalcone synthase</fullName>
    </alternativeName>
</protein>
<sequence>MVTVEEVRKAQRAEGPATVMAIGTAVPPNCVDQATYPDYYFRITNSEHKAELKEKFQRMCDKSQIKKRYMYLNEEVLKENPNMCAYMAPSLDARQDIVVVEVPKLGKEAAVKAIKEWGQPKSKITHLVFCTTSGVDMPGADYQLTKLLGLRPSVKRLMMYQQGCFAGGTVLRLAKDLAENNKGARVLVVCSEITAVTFRGPTDTHLDSLVGQALFGDGAAAIIIGSDPIPEVEKPLFELVSAAQTILPDSEGAIDGHLREVGLTFHLLKDVPGLISKNVEKSLTEAFKPLGISDWNSLFWIAHPGGPAILDQVEAKLSLKPEKLRATRHVLSEYGNMSSACVLFILDEMRRKSKEDGLKTTGEGIEWGVLFGFGPGLTVETVVLHSVAIN</sequence>
<organism>
    <name type="scientific">Hypericum androsaemum</name>
    <name type="common">Tutsan</name>
    <dbReference type="NCBI Taxonomy" id="140968"/>
    <lineage>
        <taxon>Eukaryota</taxon>
        <taxon>Viridiplantae</taxon>
        <taxon>Streptophyta</taxon>
        <taxon>Embryophyta</taxon>
        <taxon>Tracheophyta</taxon>
        <taxon>Spermatophyta</taxon>
        <taxon>Magnoliopsida</taxon>
        <taxon>eudicotyledons</taxon>
        <taxon>Gunneridae</taxon>
        <taxon>Pentapetalae</taxon>
        <taxon>rosids</taxon>
        <taxon>fabids</taxon>
        <taxon>Malpighiales</taxon>
        <taxon>Hypericaceae</taxon>
        <taxon>Hypericeae</taxon>
        <taxon>Hypericum</taxon>
    </lineage>
</organism>
<feature type="chain" id="PRO_0000215982" description="Chalcone synthase">
    <location>
        <begin position="1"/>
        <end position="390"/>
    </location>
</feature>
<feature type="active site" evidence="1 2">
    <location>
        <position position="164"/>
    </location>
</feature>
<feature type="mutagenesis site" description="63% active." evidence="3">
    <original>G</original>
    <variation>A</variation>
    <location>
        <position position="256"/>
    </location>
</feature>
<feature type="mutagenesis site" description="No effect." evidence="3">
    <original>L</original>
    <variation>M</variation>
    <location>
        <position position="263"/>
    </location>
</feature>
<feature type="mutagenesis site" description="67% active." evidence="3">
    <original>F</original>
    <variation>Y</variation>
    <location>
        <position position="265"/>
    </location>
</feature>
<feature type="mutagenesis site" description="No effect." evidence="3">
    <original>S</original>
    <variation>G</variation>
    <location>
        <position position="338"/>
    </location>
</feature>
<evidence type="ECO:0000250" key="1">
    <source>
        <dbReference type="UniProtKB" id="P30074"/>
    </source>
</evidence>
<evidence type="ECO:0000255" key="2">
    <source>
        <dbReference type="PROSITE-ProRule" id="PRU10023"/>
    </source>
</evidence>
<evidence type="ECO:0000269" key="3">
    <source>
    </source>
</evidence>
<evidence type="ECO:0000305" key="4"/>
<evidence type="ECO:0000312" key="5">
    <source>
        <dbReference type="EMBL" id="AAG30295.1"/>
    </source>
</evidence>
<comment type="function">
    <text evidence="4">The primary product of this enzyme is 4,2',4',6'-tetrahydroxychalcone (also termed naringenin-chalcone or chalcone) which undergoes enzyme-catalyzed or spontaneous isomerization into naringenin.</text>
</comment>
<comment type="catalytic activity">
    <reaction evidence="2 3">
        <text>(E)-4-coumaroyl-CoA + 3 malonyl-CoA + 3 H(+) = 2',4,4',6'-tetrahydroxychalcone + 3 CO2 + 4 CoA</text>
        <dbReference type="Rhea" id="RHEA:11128"/>
        <dbReference type="ChEBI" id="CHEBI:15378"/>
        <dbReference type="ChEBI" id="CHEBI:15413"/>
        <dbReference type="ChEBI" id="CHEBI:16526"/>
        <dbReference type="ChEBI" id="CHEBI:57287"/>
        <dbReference type="ChEBI" id="CHEBI:57384"/>
        <dbReference type="ChEBI" id="CHEBI:85008"/>
        <dbReference type="EC" id="2.3.1.74"/>
    </reaction>
</comment>
<comment type="biophysicochemical properties">
    <kinetics>
        <KM evidence="3">10.8 uM for malonyl-CoA</KM>
        <KM evidence="3">4.9 uM for 4-coumaroyl-CoA</KM>
        <KM evidence="3">6.8 uM for benzoyl-CoA</KM>
    </kinetics>
    <phDependence>
        <text evidence="3">Optimum pH is 7.0.</text>
    </phDependence>
    <temperatureDependence>
        <text evidence="3">Optimum temperature is 35 degrees Celsius.</text>
    </temperatureDependence>
</comment>
<comment type="pathway">
    <text>Secondary metabolite biosynthesis; flavonoid biosynthesis.</text>
</comment>
<comment type="similarity">
    <text evidence="3">Belongs to the thiolase-like superfamily. Chalcone/stilbene synthases family.</text>
</comment>
<accession>Q9FUB7</accession>
<name>CHSY_HYPAN</name>
<reference evidence="4 5" key="1">
    <citation type="journal article" date="2003" name="Plant J.">
        <title>Benzophenone synthase and chalcone synthase from Hypericum androsaemum cell cultures: cDNA cloning, functional expression, and site-directed mutagenesis of two polyketide synthases.</title>
        <authorList>
            <person name="Liu B."/>
            <person name="Falkenstein-Paul H."/>
            <person name="Schmidt W."/>
            <person name="Beerhues L."/>
        </authorList>
    </citation>
    <scope>NUCLEOTIDE SEQUENCE [MRNA]</scope>
    <scope>CATALYTIC ACTIVITY</scope>
    <scope>BIOPHYSICOCHEMICAL PROPERTIES</scope>
    <scope>MUTAGENESIS OF GLY-256; LEU-263; PHE-265 AND SER-338</scope>
</reference>